<sequence length="396" mass="45303">MAMAMDRIVFSPSSYVYRPCQARGSRSSRVSMASTIRSATTEVTNGRKLYIPPREVHVQVKHSMPPQKLEIFKSLEGWADETLLTYLKPVEKSWQPTDFLPEPESEGFYDQVKELRERCKELPDDYFVVLVGDMITEEALPTYQTMLNTLDGVRDETGASPTPWAIWTRAWTAEENRHGDLLNKYLYLSGRVDMRQIEKTIQYLIGSGMDPKTENNPYLGFIYTSFQERATFISHGNTARLAKDRGDLKLAQICGTIAADERRHETAYTKIVEKLFEIDPDGTILGLADMMKKKISMPAHLMYDGQDDNLFEHFSTVAQRLGVYTAKDYADILEFLVERWNVETLTDLSSEGHRAQDFVCGLPARIRKIEERAQGRAKEAAKNIPFSWIFGRNIRA</sequence>
<reference key="1">
    <citation type="journal article" date="2000" name="Nature">
        <title>Sequence and analysis of chromosome 3 of the plant Arabidopsis thaliana.</title>
        <authorList>
            <person name="Salanoubat M."/>
            <person name="Lemcke K."/>
            <person name="Rieger M."/>
            <person name="Ansorge W."/>
            <person name="Unseld M."/>
            <person name="Fartmann B."/>
            <person name="Valle G."/>
            <person name="Bloecker H."/>
            <person name="Perez-Alonso M."/>
            <person name="Obermaier B."/>
            <person name="Delseny M."/>
            <person name="Boutry M."/>
            <person name="Grivell L.A."/>
            <person name="Mache R."/>
            <person name="Puigdomenech P."/>
            <person name="De Simone V."/>
            <person name="Choisne N."/>
            <person name="Artiguenave F."/>
            <person name="Robert C."/>
            <person name="Brottier P."/>
            <person name="Wincker P."/>
            <person name="Cattolico L."/>
            <person name="Weissenbach J."/>
            <person name="Saurin W."/>
            <person name="Quetier F."/>
            <person name="Schaefer M."/>
            <person name="Mueller-Auer S."/>
            <person name="Gabel C."/>
            <person name="Fuchs M."/>
            <person name="Benes V."/>
            <person name="Wurmbach E."/>
            <person name="Drzonek H."/>
            <person name="Erfle H."/>
            <person name="Jordan N."/>
            <person name="Bangert S."/>
            <person name="Wiedelmann R."/>
            <person name="Kranz H."/>
            <person name="Voss H."/>
            <person name="Holland R."/>
            <person name="Brandt P."/>
            <person name="Nyakatura G."/>
            <person name="Vezzi A."/>
            <person name="D'Angelo M."/>
            <person name="Pallavicini A."/>
            <person name="Toppo S."/>
            <person name="Simionati B."/>
            <person name="Conrad A."/>
            <person name="Hornischer K."/>
            <person name="Kauer G."/>
            <person name="Loehnert T.-H."/>
            <person name="Nordsiek G."/>
            <person name="Reichelt J."/>
            <person name="Scharfe M."/>
            <person name="Schoen O."/>
            <person name="Bargues M."/>
            <person name="Terol J."/>
            <person name="Climent J."/>
            <person name="Navarro P."/>
            <person name="Collado C."/>
            <person name="Perez-Perez A."/>
            <person name="Ottenwaelder B."/>
            <person name="Duchemin D."/>
            <person name="Cooke R."/>
            <person name="Laudie M."/>
            <person name="Berger-Llauro C."/>
            <person name="Purnelle B."/>
            <person name="Masuy D."/>
            <person name="de Haan M."/>
            <person name="Maarse A.C."/>
            <person name="Alcaraz J.-P."/>
            <person name="Cottet A."/>
            <person name="Casacuberta E."/>
            <person name="Monfort A."/>
            <person name="Argiriou A."/>
            <person name="Flores M."/>
            <person name="Liguori R."/>
            <person name="Vitale D."/>
            <person name="Mannhaupt G."/>
            <person name="Haase D."/>
            <person name="Schoof H."/>
            <person name="Rudd S."/>
            <person name="Zaccaria P."/>
            <person name="Mewes H.-W."/>
            <person name="Mayer K.F.X."/>
            <person name="Kaul S."/>
            <person name="Town C.D."/>
            <person name="Koo H.L."/>
            <person name="Tallon L.J."/>
            <person name="Jenkins J."/>
            <person name="Rooney T."/>
            <person name="Rizzo M."/>
            <person name="Walts A."/>
            <person name="Utterback T."/>
            <person name="Fujii C.Y."/>
            <person name="Shea T.P."/>
            <person name="Creasy T.H."/>
            <person name="Haas B."/>
            <person name="Maiti R."/>
            <person name="Wu D."/>
            <person name="Peterson J."/>
            <person name="Van Aken S."/>
            <person name="Pai G."/>
            <person name="Militscher J."/>
            <person name="Sellers P."/>
            <person name="Gill J.E."/>
            <person name="Feldblyum T.V."/>
            <person name="Preuss D."/>
            <person name="Lin X."/>
            <person name="Nierman W.C."/>
            <person name="Salzberg S.L."/>
            <person name="White O."/>
            <person name="Venter J.C."/>
            <person name="Fraser C.M."/>
            <person name="Kaneko T."/>
            <person name="Nakamura Y."/>
            <person name="Sato S."/>
            <person name="Kato T."/>
            <person name="Asamizu E."/>
            <person name="Sasamoto S."/>
            <person name="Kimura T."/>
            <person name="Idesawa K."/>
            <person name="Kawashima K."/>
            <person name="Kishida Y."/>
            <person name="Kiyokawa C."/>
            <person name="Kohara M."/>
            <person name="Matsumoto M."/>
            <person name="Matsuno A."/>
            <person name="Muraki A."/>
            <person name="Nakayama S."/>
            <person name="Nakazaki N."/>
            <person name="Shinpo S."/>
            <person name="Takeuchi C."/>
            <person name="Wada T."/>
            <person name="Watanabe A."/>
            <person name="Yamada M."/>
            <person name="Yasuda M."/>
            <person name="Tabata S."/>
        </authorList>
    </citation>
    <scope>NUCLEOTIDE SEQUENCE [LARGE SCALE GENOMIC DNA]</scope>
    <source>
        <strain>cv. Columbia</strain>
    </source>
</reference>
<reference key="2">
    <citation type="journal article" date="2017" name="Plant J.">
        <title>Araport11: a complete reannotation of the Arabidopsis thaliana reference genome.</title>
        <authorList>
            <person name="Cheng C.Y."/>
            <person name="Krishnakumar V."/>
            <person name="Chan A.P."/>
            <person name="Thibaud-Nissen F."/>
            <person name="Schobel S."/>
            <person name="Town C.D."/>
        </authorList>
    </citation>
    <scope>GENOME REANNOTATION</scope>
    <source>
        <strain>cv. Columbia</strain>
    </source>
</reference>
<reference key="3">
    <citation type="journal article" date="2003" name="Science">
        <title>Empirical analysis of transcriptional activity in the Arabidopsis genome.</title>
        <authorList>
            <person name="Yamada K."/>
            <person name="Lim J."/>
            <person name="Dale J.M."/>
            <person name="Chen H."/>
            <person name="Shinn P."/>
            <person name="Palm C.J."/>
            <person name="Southwick A.M."/>
            <person name="Wu H.C."/>
            <person name="Kim C.J."/>
            <person name="Nguyen M."/>
            <person name="Pham P.K."/>
            <person name="Cheuk R.F."/>
            <person name="Karlin-Newmann G."/>
            <person name="Liu S.X."/>
            <person name="Lam B."/>
            <person name="Sakano H."/>
            <person name="Wu T."/>
            <person name="Yu G."/>
            <person name="Miranda M."/>
            <person name="Quach H.L."/>
            <person name="Tripp M."/>
            <person name="Chang C.H."/>
            <person name="Lee J.M."/>
            <person name="Toriumi M.J."/>
            <person name="Chan M.M."/>
            <person name="Tang C.C."/>
            <person name="Onodera C.S."/>
            <person name="Deng J.M."/>
            <person name="Akiyama K."/>
            <person name="Ansari Y."/>
            <person name="Arakawa T."/>
            <person name="Banh J."/>
            <person name="Banno F."/>
            <person name="Bowser L."/>
            <person name="Brooks S.Y."/>
            <person name="Carninci P."/>
            <person name="Chao Q."/>
            <person name="Choy N."/>
            <person name="Enju A."/>
            <person name="Goldsmith A.D."/>
            <person name="Gurjal M."/>
            <person name="Hansen N.F."/>
            <person name="Hayashizaki Y."/>
            <person name="Johnson-Hopson C."/>
            <person name="Hsuan V.W."/>
            <person name="Iida K."/>
            <person name="Karnes M."/>
            <person name="Khan S."/>
            <person name="Koesema E."/>
            <person name="Ishida J."/>
            <person name="Jiang P.X."/>
            <person name="Jones T."/>
            <person name="Kawai J."/>
            <person name="Kamiya A."/>
            <person name="Meyers C."/>
            <person name="Nakajima M."/>
            <person name="Narusaka M."/>
            <person name="Seki M."/>
            <person name="Sakurai T."/>
            <person name="Satou M."/>
            <person name="Tamse R."/>
            <person name="Vaysberg M."/>
            <person name="Wallender E.K."/>
            <person name="Wong C."/>
            <person name="Yamamura Y."/>
            <person name="Yuan S."/>
            <person name="Shinozaki K."/>
            <person name="Davis R.W."/>
            <person name="Theologis A."/>
            <person name="Ecker J.R."/>
        </authorList>
    </citation>
    <scope>NUCLEOTIDE SEQUENCE [LARGE SCALE MRNA]</scope>
    <source>
        <strain>cv. Columbia</strain>
    </source>
</reference>
<reference key="4">
    <citation type="submission" date="2002-03" db="EMBL/GenBank/DDBJ databases">
        <title>Full-length cDNA from Arabidopsis thaliana.</title>
        <authorList>
            <person name="Brover V.V."/>
            <person name="Troukhan M.E."/>
            <person name="Alexandrov N.A."/>
            <person name="Lu Y.-P."/>
            <person name="Flavell R.B."/>
            <person name="Feldmann K.A."/>
        </authorList>
    </citation>
    <scope>NUCLEOTIDE SEQUENCE [LARGE SCALE MRNA]</scope>
</reference>
<reference key="5">
    <citation type="journal article" date="2007" name="Plant Mol. Biol.">
        <title>The Arabidopsis stearoyl-acyl carrier protein-desaturase family and the contribution of leaf isoforms to oleic acid synthesis.</title>
        <authorList>
            <person name="Kachroo A."/>
            <person name="Shanklin J."/>
            <person name="Whittle E."/>
            <person name="Lapchyk L."/>
            <person name="Hildebrand D."/>
            <person name="Kachroo P."/>
        </authorList>
    </citation>
    <scope>GENE FAMILY</scope>
    <scope>FUNCTION</scope>
    <scope>CATALYTIC ACTIVITY</scope>
    <scope>TISSUE SPECIFICITY</scope>
</reference>
<reference key="6">
    <citation type="journal article" date="2008" name="Plant Physiol.">
        <title>LEAFY COTYLEDON1 is a key regulator of fatty acid biosynthesis in Arabidopsis.</title>
        <authorList>
            <person name="Mu J."/>
            <person name="Tan H."/>
            <person name="Zheng Q."/>
            <person name="Fu F."/>
            <person name="Liang Y."/>
            <person name="Zhang J."/>
            <person name="Yang X."/>
            <person name="Wang T."/>
            <person name="Chong K."/>
            <person name="Wang X.J."/>
            <person name="Zuo J."/>
        </authorList>
    </citation>
    <scope>INDUCTION</scope>
</reference>
<reference key="7">
    <citation type="journal article" date="2008" name="PLoS ONE">
        <title>Sorting signals, N-terminal modifications and abundance of the chloroplast proteome.</title>
        <authorList>
            <person name="Zybailov B."/>
            <person name="Rutschow H."/>
            <person name="Friso G."/>
            <person name="Rudella A."/>
            <person name="Emanuelsson O."/>
            <person name="Sun Q."/>
            <person name="van Wijk K.J."/>
        </authorList>
    </citation>
    <scope>IDENTIFICATION BY MASS SPECTROMETRY</scope>
    <scope>SUBCELLULAR LOCATION [LARGE SCALE ANALYSIS]</scope>
</reference>
<protein>
    <recommendedName>
        <fullName>Stearoyl-[acyl-carrier-protein] 9-desaturase 5, chloroplastic</fullName>
        <shortName>Stearoyl-ACP desaturase 5</shortName>
        <ecNumber evidence="3">1.14.19.2</ecNumber>
    </recommendedName>
    <alternativeName>
        <fullName>Acyl-[acyl-carrier-protein] desaturase 5</fullName>
    </alternativeName>
</protein>
<comment type="function">
    <text evidence="3">Converts stearoyl-ACP to oleoyl-ACP by introduction of a cis double bond between carbons 9 and 10 of the acyl chain.</text>
</comment>
<comment type="catalytic activity">
    <reaction evidence="3">
        <text>octadecanoyl-[ACP] + 2 reduced [2Fe-2S]-[ferredoxin] + O2 + 2 H(+) = (9Z)-octadecenoyl-[ACP] + 2 oxidized [2Fe-2S]-[ferredoxin] + 2 H2O</text>
        <dbReference type="Rhea" id="RHEA:11776"/>
        <dbReference type="Rhea" id="RHEA-COMP:9656"/>
        <dbReference type="Rhea" id="RHEA-COMP:9924"/>
        <dbReference type="Rhea" id="RHEA-COMP:10000"/>
        <dbReference type="Rhea" id="RHEA-COMP:10001"/>
        <dbReference type="ChEBI" id="CHEBI:15377"/>
        <dbReference type="ChEBI" id="CHEBI:15378"/>
        <dbReference type="ChEBI" id="CHEBI:15379"/>
        <dbReference type="ChEBI" id="CHEBI:33737"/>
        <dbReference type="ChEBI" id="CHEBI:33738"/>
        <dbReference type="ChEBI" id="CHEBI:78495"/>
        <dbReference type="ChEBI" id="CHEBI:78783"/>
        <dbReference type="EC" id="1.14.19.2"/>
    </reaction>
</comment>
<comment type="cofactor">
    <cofactor evidence="1">
        <name>Fe(2+)</name>
        <dbReference type="ChEBI" id="CHEBI:29033"/>
    </cofactor>
    <text evidence="1">Binds 2 Fe(2+) ions per subunit.</text>
</comment>
<comment type="pathway">
    <text>Lipid metabolism; fatty acid metabolism.</text>
</comment>
<comment type="subunit">
    <text evidence="1">Homodimer.</text>
</comment>
<comment type="subcellular location">
    <subcellularLocation>
        <location evidence="4">Plastid</location>
        <location evidence="4">Chloroplast stroma</location>
    </subcellularLocation>
</comment>
<comment type="tissue specificity">
    <text evidence="3">Ubiquitously expressed with a preference in leaves, flowers and stems.</text>
</comment>
<comment type="induction">
    <text evidence="5">Positively regulated by LEC1.</text>
</comment>
<comment type="similarity">
    <text evidence="6">Belongs to the fatty acid desaturase type 2 family.</text>
</comment>
<proteinExistence type="evidence at protein level"/>
<accession>Q9M879</accession>
<accession>Q8L468</accession>
<accession>Q8LBC6</accession>
<name>STAD5_ARATH</name>
<keyword id="KW-0150">Chloroplast</keyword>
<keyword id="KW-0275">Fatty acid biosynthesis</keyword>
<keyword id="KW-0276">Fatty acid metabolism</keyword>
<keyword id="KW-0408">Iron</keyword>
<keyword id="KW-0444">Lipid biosynthesis</keyword>
<keyword id="KW-0443">Lipid metabolism</keyword>
<keyword id="KW-0479">Metal-binding</keyword>
<keyword id="KW-0560">Oxidoreductase</keyword>
<keyword id="KW-0934">Plastid</keyword>
<keyword id="KW-1185">Reference proteome</keyword>
<keyword id="KW-0809">Transit peptide</keyword>
<gene>
    <name type="primary">S-ACP-DES5</name>
    <name type="synonym">AAD5</name>
    <name type="synonym">SAD5</name>
    <name type="ordered locus">At3g02630</name>
    <name type="ORF">F16B3.26</name>
</gene>
<evidence type="ECO:0000250" key="1">
    <source>
        <dbReference type="UniProtKB" id="P22337"/>
    </source>
</evidence>
<evidence type="ECO:0000255" key="2"/>
<evidence type="ECO:0000269" key="3">
    <source>
    </source>
</evidence>
<evidence type="ECO:0000269" key="4">
    <source>
    </source>
</evidence>
<evidence type="ECO:0000269" key="5">
    <source>
    </source>
</evidence>
<evidence type="ECO:0000305" key="6"/>
<organism>
    <name type="scientific">Arabidopsis thaliana</name>
    <name type="common">Mouse-ear cress</name>
    <dbReference type="NCBI Taxonomy" id="3702"/>
    <lineage>
        <taxon>Eukaryota</taxon>
        <taxon>Viridiplantae</taxon>
        <taxon>Streptophyta</taxon>
        <taxon>Embryophyta</taxon>
        <taxon>Tracheophyta</taxon>
        <taxon>Spermatophyta</taxon>
        <taxon>Magnoliopsida</taxon>
        <taxon>eudicotyledons</taxon>
        <taxon>Gunneridae</taxon>
        <taxon>Pentapetalae</taxon>
        <taxon>rosids</taxon>
        <taxon>malvids</taxon>
        <taxon>Brassicales</taxon>
        <taxon>Brassicaceae</taxon>
        <taxon>Camelineae</taxon>
        <taxon>Arabidopsis</taxon>
    </lineage>
</organism>
<feature type="transit peptide" description="Chloroplast" evidence="2">
    <location>
        <begin position="1"/>
        <end position="29"/>
    </location>
</feature>
<feature type="chain" id="PRO_0000401423" description="Stearoyl-[acyl-carrier-protein] 9-desaturase 5, chloroplastic">
    <location>
        <begin position="30"/>
        <end position="396"/>
    </location>
</feature>
<feature type="binding site" evidence="1">
    <location>
        <position position="137"/>
    </location>
    <ligand>
        <name>Fe cation</name>
        <dbReference type="ChEBI" id="CHEBI:24875"/>
        <label>1</label>
    </ligand>
</feature>
<feature type="binding site" evidence="1">
    <location>
        <position position="175"/>
    </location>
    <ligand>
        <name>Fe cation</name>
        <dbReference type="ChEBI" id="CHEBI:24875"/>
        <label>1</label>
    </ligand>
</feature>
<feature type="binding site" evidence="1">
    <location>
        <position position="175"/>
    </location>
    <ligand>
        <name>Fe cation</name>
        <dbReference type="ChEBI" id="CHEBI:24875"/>
        <label>2</label>
    </ligand>
</feature>
<feature type="binding site" evidence="1">
    <location>
        <position position="178"/>
    </location>
    <ligand>
        <name>Fe cation</name>
        <dbReference type="ChEBI" id="CHEBI:24875"/>
        <label>1</label>
    </ligand>
</feature>
<feature type="binding site" evidence="1">
    <location>
        <position position="228"/>
    </location>
    <ligand>
        <name>Fe cation</name>
        <dbReference type="ChEBI" id="CHEBI:24875"/>
        <label>2</label>
    </ligand>
</feature>
<feature type="binding site" evidence="1">
    <location>
        <position position="261"/>
    </location>
    <ligand>
        <name>Fe cation</name>
        <dbReference type="ChEBI" id="CHEBI:24875"/>
        <label>1</label>
    </ligand>
</feature>
<feature type="binding site" evidence="1">
    <location>
        <position position="261"/>
    </location>
    <ligand>
        <name>Fe cation</name>
        <dbReference type="ChEBI" id="CHEBI:24875"/>
        <label>2</label>
    </ligand>
</feature>
<feature type="binding site" evidence="1">
    <location>
        <position position="264"/>
    </location>
    <ligand>
        <name>Fe cation</name>
        <dbReference type="ChEBI" id="CHEBI:24875"/>
        <label>2</label>
    </ligand>
</feature>
<feature type="sequence conflict" description="In Ref. 4; AAM64846." evidence="6" ref="4">
    <original>R</original>
    <variation>L</variation>
    <location>
        <position position="18"/>
    </location>
</feature>
<feature type="sequence conflict" description="In Ref. 3; AAM20635/AAM91283." evidence="6" ref="3">
    <original>E</original>
    <variation>D</variation>
    <location>
        <position position="70"/>
    </location>
</feature>
<dbReference type="EC" id="1.14.19.2" evidence="3"/>
<dbReference type="EMBL" id="AC021640">
    <property type="protein sequence ID" value="AAF32470.1"/>
    <property type="molecule type" value="Genomic_DNA"/>
</dbReference>
<dbReference type="EMBL" id="CP002686">
    <property type="protein sequence ID" value="AEE73841.1"/>
    <property type="molecule type" value="Genomic_DNA"/>
</dbReference>
<dbReference type="EMBL" id="AY099784">
    <property type="protein sequence ID" value="AAM20635.1"/>
    <property type="molecule type" value="mRNA"/>
</dbReference>
<dbReference type="EMBL" id="AY128883">
    <property type="protein sequence ID" value="AAM91283.1"/>
    <property type="molecule type" value="mRNA"/>
</dbReference>
<dbReference type="EMBL" id="AY087294">
    <property type="protein sequence ID" value="AAM64846.1"/>
    <property type="molecule type" value="mRNA"/>
</dbReference>
<dbReference type="RefSeq" id="NP_186912.1">
    <property type="nucleotide sequence ID" value="NM_111131.3"/>
</dbReference>
<dbReference type="SMR" id="Q9M879"/>
<dbReference type="BioGRID" id="6107">
    <property type="interactions" value="8"/>
</dbReference>
<dbReference type="FunCoup" id="Q9M879">
    <property type="interactions" value="86"/>
</dbReference>
<dbReference type="STRING" id="3702.Q9M879"/>
<dbReference type="GlyGen" id="Q9M879">
    <property type="glycosylation" value="1 site"/>
</dbReference>
<dbReference type="iPTMnet" id="Q9M879"/>
<dbReference type="PaxDb" id="3702-AT3G02630.1"/>
<dbReference type="ProteomicsDB" id="245215"/>
<dbReference type="EnsemblPlants" id="AT3G02630.1">
    <property type="protein sequence ID" value="AT3G02630.1"/>
    <property type="gene ID" value="AT3G02630"/>
</dbReference>
<dbReference type="GeneID" id="820773"/>
<dbReference type="Gramene" id="AT3G02630.1">
    <property type="protein sequence ID" value="AT3G02630.1"/>
    <property type="gene ID" value="AT3G02630"/>
</dbReference>
<dbReference type="KEGG" id="ath:AT3G02630"/>
<dbReference type="Araport" id="AT3G02630"/>
<dbReference type="TAIR" id="AT3G02630">
    <property type="gene designation" value="AAD5"/>
</dbReference>
<dbReference type="eggNOG" id="ENOG502QRJK">
    <property type="taxonomic scope" value="Eukaryota"/>
</dbReference>
<dbReference type="HOGENOM" id="CLU_034505_1_1_1"/>
<dbReference type="InParanoid" id="Q9M879"/>
<dbReference type="OMA" id="WRWVGRW"/>
<dbReference type="PhylomeDB" id="Q9M879"/>
<dbReference type="BRENDA" id="1.14.19.2">
    <property type="organism ID" value="399"/>
</dbReference>
<dbReference type="UniPathway" id="UPA00199"/>
<dbReference type="PRO" id="PR:Q9M879"/>
<dbReference type="Proteomes" id="UP000006548">
    <property type="component" value="Chromosome 3"/>
</dbReference>
<dbReference type="ExpressionAtlas" id="Q9M879">
    <property type="expression patterns" value="baseline and differential"/>
</dbReference>
<dbReference type="GO" id="GO:0009507">
    <property type="term" value="C:chloroplast"/>
    <property type="evidence" value="ECO:0007005"/>
    <property type="project" value="TAIR"/>
</dbReference>
<dbReference type="GO" id="GO:0009570">
    <property type="term" value="C:chloroplast stroma"/>
    <property type="evidence" value="ECO:0007005"/>
    <property type="project" value="TAIR"/>
</dbReference>
<dbReference type="GO" id="GO:0046872">
    <property type="term" value="F:metal ion binding"/>
    <property type="evidence" value="ECO:0007669"/>
    <property type="project" value="UniProtKB-KW"/>
</dbReference>
<dbReference type="GO" id="GO:0045300">
    <property type="term" value="F:stearoyl-[ACP] desaturase activity"/>
    <property type="evidence" value="ECO:0007669"/>
    <property type="project" value="UniProtKB-EC"/>
</dbReference>
<dbReference type="GO" id="GO:0006633">
    <property type="term" value="P:fatty acid biosynthetic process"/>
    <property type="evidence" value="ECO:0007669"/>
    <property type="project" value="UniProtKB-KW"/>
</dbReference>
<dbReference type="GO" id="GO:0006631">
    <property type="term" value="P:fatty acid metabolic process"/>
    <property type="evidence" value="ECO:0000315"/>
    <property type="project" value="TAIR"/>
</dbReference>
<dbReference type="CDD" id="cd01050">
    <property type="entry name" value="Acyl_ACP_Desat"/>
    <property type="match status" value="1"/>
</dbReference>
<dbReference type="FunFam" id="1.10.620.20:FF:000002">
    <property type="entry name" value="Stearoyl-[acyl-carrier-protein] 9-desaturase, chloroplastic"/>
    <property type="match status" value="1"/>
</dbReference>
<dbReference type="Gene3D" id="1.10.620.20">
    <property type="entry name" value="Ribonucleotide Reductase, subunit A"/>
    <property type="match status" value="1"/>
</dbReference>
<dbReference type="InterPro" id="IPR005067">
    <property type="entry name" value="Fatty_acid_desaturase-2"/>
</dbReference>
<dbReference type="InterPro" id="IPR009078">
    <property type="entry name" value="Ferritin-like_SF"/>
</dbReference>
<dbReference type="InterPro" id="IPR012348">
    <property type="entry name" value="RNR-like"/>
</dbReference>
<dbReference type="PANTHER" id="PTHR31155">
    <property type="entry name" value="ACYL- ACYL-CARRIER-PROTEIN DESATURASE-RELATED"/>
    <property type="match status" value="1"/>
</dbReference>
<dbReference type="PANTHER" id="PTHR31155:SF27">
    <property type="entry name" value="STEAROYL-[ACYL-CARRIER-PROTEIN] 9-DESATURASE 5, CHLOROPLASTIC"/>
    <property type="match status" value="1"/>
</dbReference>
<dbReference type="Pfam" id="PF03405">
    <property type="entry name" value="FA_desaturase_2"/>
    <property type="match status" value="1"/>
</dbReference>
<dbReference type="PIRSF" id="PIRSF000346">
    <property type="entry name" value="Dlt9_acylACP_des"/>
    <property type="match status" value="1"/>
</dbReference>
<dbReference type="SUPFAM" id="SSF47240">
    <property type="entry name" value="Ferritin-like"/>
    <property type="match status" value="1"/>
</dbReference>